<sequence>MSIKFKKVDYIYSPETPMEKKGLDNVSFELADNSFVALIGHTGSGKSTLMQHFNALLKPSAGVINIVGYHITPETSNKNLKRLRKKVSLVFQFPEVQLFENTVLEDIEFGPKNFGATEEEAKNKALKWMKKVGISEELASKSPFELSGGQMRRVAIAGVMAIEPQILCLDEPAAGLDPKSRHDMMQLFLDYQKAGHTVILVTHNMDDVAEYANDVLVMEKGKLIKHDTPENIFADRKWLKKHNLSEPVTGIFASELNNYKFLKNPLTIDQLIDGIKNNLEGEFYE</sequence>
<accession>Q5FM62</accession>
<name>ECFA2_LACAC</name>
<feature type="chain" id="PRO_0000287942" description="Energy-coupling factor transporter ATP-binding protein EcfA2">
    <location>
        <begin position="1"/>
        <end position="285"/>
    </location>
</feature>
<feature type="domain" description="ABC transporter" evidence="1">
    <location>
        <begin position="3"/>
        <end position="245"/>
    </location>
</feature>
<feature type="binding site" evidence="1">
    <location>
        <begin position="40"/>
        <end position="47"/>
    </location>
    <ligand>
        <name>ATP</name>
        <dbReference type="ChEBI" id="CHEBI:30616"/>
    </ligand>
</feature>
<evidence type="ECO:0000255" key="1">
    <source>
        <dbReference type="HAMAP-Rule" id="MF_01710"/>
    </source>
</evidence>
<protein>
    <recommendedName>
        <fullName evidence="1">Energy-coupling factor transporter ATP-binding protein EcfA2</fullName>
        <shortName evidence="1">ECF transporter A component EcfA2</shortName>
        <ecNumber evidence="1">7.-.-.-</ecNumber>
    </recommendedName>
</protein>
<proteinExistence type="inferred from homology"/>
<reference key="1">
    <citation type="journal article" date="2005" name="Proc. Natl. Acad. Sci. U.S.A.">
        <title>Complete genome sequence of the probiotic lactic acid bacterium Lactobacillus acidophilus NCFM.</title>
        <authorList>
            <person name="Altermann E."/>
            <person name="Russell W.M."/>
            <person name="Azcarate-Peril M.A."/>
            <person name="Barrangou R."/>
            <person name="Buck B.L."/>
            <person name="McAuliffe O."/>
            <person name="Souther N."/>
            <person name="Dobson A."/>
            <person name="Duong T."/>
            <person name="Callanan M."/>
            <person name="Lick S."/>
            <person name="Hamrick A."/>
            <person name="Cano R."/>
            <person name="Klaenhammer T.R."/>
        </authorList>
    </citation>
    <scope>NUCLEOTIDE SEQUENCE [LARGE SCALE GENOMIC DNA]</scope>
    <source>
        <strain>ATCC 700396 / NCK56 / N2 / NCFM</strain>
    </source>
</reference>
<organism>
    <name type="scientific">Lactobacillus acidophilus (strain ATCC 700396 / NCK56 / N2 / NCFM)</name>
    <dbReference type="NCBI Taxonomy" id="272621"/>
    <lineage>
        <taxon>Bacteria</taxon>
        <taxon>Bacillati</taxon>
        <taxon>Bacillota</taxon>
        <taxon>Bacilli</taxon>
        <taxon>Lactobacillales</taxon>
        <taxon>Lactobacillaceae</taxon>
        <taxon>Lactobacillus</taxon>
    </lineage>
</organism>
<dbReference type="EC" id="7.-.-.-" evidence="1"/>
<dbReference type="EMBL" id="CP000033">
    <property type="protein sequence ID" value="AAV42212.1"/>
    <property type="molecule type" value="Genomic_DNA"/>
</dbReference>
<dbReference type="RefSeq" id="WP_003549051.1">
    <property type="nucleotide sequence ID" value="NC_006814.3"/>
</dbReference>
<dbReference type="RefSeq" id="YP_193243.1">
    <property type="nucleotide sequence ID" value="NC_006814.3"/>
</dbReference>
<dbReference type="SMR" id="Q5FM62"/>
<dbReference type="STRING" id="272621.LBA0320"/>
<dbReference type="KEGG" id="lac:LBA0320"/>
<dbReference type="PATRIC" id="fig|272621.13.peg.306"/>
<dbReference type="eggNOG" id="COG1122">
    <property type="taxonomic scope" value="Bacteria"/>
</dbReference>
<dbReference type="HOGENOM" id="CLU_000604_1_22_9"/>
<dbReference type="OrthoDB" id="9784332at2"/>
<dbReference type="BioCyc" id="LACI272621:G1G49-314-MONOMER"/>
<dbReference type="Proteomes" id="UP000006381">
    <property type="component" value="Chromosome"/>
</dbReference>
<dbReference type="GO" id="GO:0043190">
    <property type="term" value="C:ATP-binding cassette (ABC) transporter complex"/>
    <property type="evidence" value="ECO:0007669"/>
    <property type="project" value="TreeGrafter"/>
</dbReference>
<dbReference type="GO" id="GO:0005524">
    <property type="term" value="F:ATP binding"/>
    <property type="evidence" value="ECO:0007669"/>
    <property type="project" value="UniProtKB-KW"/>
</dbReference>
<dbReference type="GO" id="GO:0016887">
    <property type="term" value="F:ATP hydrolysis activity"/>
    <property type="evidence" value="ECO:0007669"/>
    <property type="project" value="InterPro"/>
</dbReference>
<dbReference type="GO" id="GO:0042626">
    <property type="term" value="F:ATPase-coupled transmembrane transporter activity"/>
    <property type="evidence" value="ECO:0007669"/>
    <property type="project" value="TreeGrafter"/>
</dbReference>
<dbReference type="CDD" id="cd03225">
    <property type="entry name" value="ABC_cobalt_CbiO_domain1"/>
    <property type="match status" value="1"/>
</dbReference>
<dbReference type="FunFam" id="3.40.50.300:FF:000224">
    <property type="entry name" value="Energy-coupling factor transporter ATP-binding protein EcfA"/>
    <property type="match status" value="1"/>
</dbReference>
<dbReference type="Gene3D" id="3.40.50.300">
    <property type="entry name" value="P-loop containing nucleotide triphosphate hydrolases"/>
    <property type="match status" value="1"/>
</dbReference>
<dbReference type="InterPro" id="IPR003593">
    <property type="entry name" value="AAA+_ATPase"/>
</dbReference>
<dbReference type="InterPro" id="IPR003439">
    <property type="entry name" value="ABC_transporter-like_ATP-bd"/>
</dbReference>
<dbReference type="InterPro" id="IPR017871">
    <property type="entry name" value="ABC_transporter-like_CS"/>
</dbReference>
<dbReference type="InterPro" id="IPR015856">
    <property type="entry name" value="ABC_transpr_CbiO/EcfA_su"/>
</dbReference>
<dbReference type="InterPro" id="IPR050095">
    <property type="entry name" value="ECF_ABC_transporter_ATP-bd"/>
</dbReference>
<dbReference type="InterPro" id="IPR030946">
    <property type="entry name" value="EcfA2"/>
</dbReference>
<dbReference type="InterPro" id="IPR027417">
    <property type="entry name" value="P-loop_NTPase"/>
</dbReference>
<dbReference type="NCBIfam" id="TIGR04521">
    <property type="entry name" value="ECF_ATPase_2"/>
    <property type="match status" value="1"/>
</dbReference>
<dbReference type="PANTHER" id="PTHR43553:SF27">
    <property type="entry name" value="ENERGY-COUPLING FACTOR TRANSPORTER ATP-BINDING PROTEIN ECFA2"/>
    <property type="match status" value="1"/>
</dbReference>
<dbReference type="PANTHER" id="PTHR43553">
    <property type="entry name" value="HEAVY METAL TRANSPORTER"/>
    <property type="match status" value="1"/>
</dbReference>
<dbReference type="Pfam" id="PF00005">
    <property type="entry name" value="ABC_tran"/>
    <property type="match status" value="1"/>
</dbReference>
<dbReference type="SMART" id="SM00382">
    <property type="entry name" value="AAA"/>
    <property type="match status" value="1"/>
</dbReference>
<dbReference type="SUPFAM" id="SSF52540">
    <property type="entry name" value="P-loop containing nucleoside triphosphate hydrolases"/>
    <property type="match status" value="1"/>
</dbReference>
<dbReference type="PROSITE" id="PS00211">
    <property type="entry name" value="ABC_TRANSPORTER_1"/>
    <property type="match status" value="1"/>
</dbReference>
<dbReference type="PROSITE" id="PS50893">
    <property type="entry name" value="ABC_TRANSPORTER_2"/>
    <property type="match status" value="1"/>
</dbReference>
<dbReference type="PROSITE" id="PS51246">
    <property type="entry name" value="CBIO"/>
    <property type="match status" value="1"/>
</dbReference>
<keyword id="KW-0067">ATP-binding</keyword>
<keyword id="KW-1003">Cell membrane</keyword>
<keyword id="KW-0472">Membrane</keyword>
<keyword id="KW-0547">Nucleotide-binding</keyword>
<keyword id="KW-1185">Reference proteome</keyword>
<keyword id="KW-1278">Translocase</keyword>
<keyword id="KW-0813">Transport</keyword>
<gene>
    <name evidence="1" type="primary">ecfA2</name>
    <name type="synonym">cbiO2</name>
    <name type="ordered locus">LBA0320</name>
</gene>
<comment type="function">
    <text evidence="1">ATP-binding (A) component of a common energy-coupling factor (ECF) ABC-transporter complex. Unlike classic ABC transporters this ECF transporter provides the energy necessary to transport a number of different substrates.</text>
</comment>
<comment type="subunit">
    <text evidence="1">Forms a stable energy-coupling factor (ECF) transporter complex composed of 2 membrane-embedded substrate-binding proteins (S component), 2 ATP-binding proteins (A component) and 2 transmembrane proteins (T component).</text>
</comment>
<comment type="subcellular location">
    <subcellularLocation>
        <location evidence="1">Cell membrane</location>
        <topology evidence="1">Peripheral membrane protein</topology>
    </subcellularLocation>
</comment>
<comment type="similarity">
    <text evidence="1">Belongs to the ABC transporter superfamily. Energy-coupling factor EcfA family.</text>
</comment>